<protein>
    <recommendedName>
        <fullName evidence="1">Large ribosomal subunit protein uL10</fullName>
    </recommendedName>
    <alternativeName>
        <fullName evidence="2">50S ribosomal protein L10</fullName>
    </alternativeName>
</protein>
<sequence length="177" mass="18348">MALNLSQKQEVVAELADIAAKAHSLIAAEYAGITVSQMTAMRKQARETGVFLKVVKNTLAVRAVEGTDFAVAADKLVGPLLYAFSMEEPGAAGRLIKEFAKGNDKLQAKVVSIGGELFPASHVDVLASLPTLDQALAMLARVLSEPAAMFARAVKAVGDKQGGGDEAAAPVAETAEA</sequence>
<dbReference type="EMBL" id="AF426391">
    <property type="protein sequence ID" value="AAL74158.1"/>
    <property type="molecule type" value="Genomic_DNA"/>
</dbReference>
<dbReference type="EMBL" id="AE008922">
    <property type="protein sequence ID" value="AAM40196.1"/>
    <property type="molecule type" value="Genomic_DNA"/>
</dbReference>
<dbReference type="RefSeq" id="NP_636272.1">
    <property type="nucleotide sequence ID" value="NC_003902.1"/>
</dbReference>
<dbReference type="RefSeq" id="WP_011036116.1">
    <property type="nucleotide sequence ID" value="NC_003902.1"/>
</dbReference>
<dbReference type="SMR" id="Q8RTJ3"/>
<dbReference type="STRING" id="190485.XCC0886"/>
<dbReference type="EnsemblBacteria" id="AAM40196">
    <property type="protein sequence ID" value="AAM40196"/>
    <property type="gene ID" value="XCC0886"/>
</dbReference>
<dbReference type="KEGG" id="xcc:XCC0886"/>
<dbReference type="PATRIC" id="fig|190485.4.peg.957"/>
<dbReference type="eggNOG" id="COG0244">
    <property type="taxonomic scope" value="Bacteria"/>
</dbReference>
<dbReference type="HOGENOM" id="CLU_092227_0_1_6"/>
<dbReference type="OrthoDB" id="9808307at2"/>
<dbReference type="Proteomes" id="UP000001010">
    <property type="component" value="Chromosome"/>
</dbReference>
<dbReference type="GO" id="GO:0022625">
    <property type="term" value="C:cytosolic large ribosomal subunit"/>
    <property type="evidence" value="ECO:0000318"/>
    <property type="project" value="GO_Central"/>
</dbReference>
<dbReference type="GO" id="GO:0070180">
    <property type="term" value="F:large ribosomal subunit rRNA binding"/>
    <property type="evidence" value="ECO:0007669"/>
    <property type="project" value="UniProtKB-UniRule"/>
</dbReference>
<dbReference type="GO" id="GO:0003735">
    <property type="term" value="F:structural constituent of ribosome"/>
    <property type="evidence" value="ECO:0000318"/>
    <property type="project" value="GO_Central"/>
</dbReference>
<dbReference type="GO" id="GO:0006412">
    <property type="term" value="P:translation"/>
    <property type="evidence" value="ECO:0000318"/>
    <property type="project" value="GO_Central"/>
</dbReference>
<dbReference type="CDD" id="cd05797">
    <property type="entry name" value="Ribosomal_L10"/>
    <property type="match status" value="1"/>
</dbReference>
<dbReference type="FunFam" id="3.30.70.1730:FF:000001">
    <property type="entry name" value="50S ribosomal protein L10"/>
    <property type="match status" value="1"/>
</dbReference>
<dbReference type="Gene3D" id="3.30.70.1730">
    <property type="match status" value="1"/>
</dbReference>
<dbReference type="HAMAP" id="MF_00362">
    <property type="entry name" value="Ribosomal_uL10"/>
    <property type="match status" value="1"/>
</dbReference>
<dbReference type="InterPro" id="IPR001790">
    <property type="entry name" value="Ribosomal_uL10"/>
</dbReference>
<dbReference type="InterPro" id="IPR043141">
    <property type="entry name" value="Ribosomal_uL10-like_sf"/>
</dbReference>
<dbReference type="InterPro" id="IPR022973">
    <property type="entry name" value="Ribosomal_uL10_bac"/>
</dbReference>
<dbReference type="InterPro" id="IPR047865">
    <property type="entry name" value="Ribosomal_uL10_bac_type"/>
</dbReference>
<dbReference type="InterPro" id="IPR002363">
    <property type="entry name" value="Ribosomal_uL10_CS_bac"/>
</dbReference>
<dbReference type="NCBIfam" id="NF000955">
    <property type="entry name" value="PRK00099.1-1"/>
    <property type="match status" value="1"/>
</dbReference>
<dbReference type="PANTHER" id="PTHR11560">
    <property type="entry name" value="39S RIBOSOMAL PROTEIN L10, MITOCHONDRIAL"/>
    <property type="match status" value="1"/>
</dbReference>
<dbReference type="Pfam" id="PF00466">
    <property type="entry name" value="Ribosomal_L10"/>
    <property type="match status" value="1"/>
</dbReference>
<dbReference type="SUPFAM" id="SSF160369">
    <property type="entry name" value="Ribosomal protein L10-like"/>
    <property type="match status" value="1"/>
</dbReference>
<dbReference type="PROSITE" id="PS01109">
    <property type="entry name" value="RIBOSOMAL_L10"/>
    <property type="match status" value="1"/>
</dbReference>
<reference key="1">
    <citation type="submission" date="2001-10" db="EMBL/GenBank/DDBJ databases">
        <authorList>
            <person name="Chen S.-J."/>
            <person name="Chiang Y.-L."/>
            <person name="Yu Y.-J."/>
            <person name="Yang M.-T."/>
        </authorList>
    </citation>
    <scope>NUCLEOTIDE SEQUENCE [GENOMIC DNA]</scope>
</reference>
<reference key="2">
    <citation type="journal article" date="2002" name="Nature">
        <title>Comparison of the genomes of two Xanthomonas pathogens with differing host specificities.</title>
        <authorList>
            <person name="da Silva A.C.R."/>
            <person name="Ferro J.A."/>
            <person name="Reinach F.C."/>
            <person name="Farah C.S."/>
            <person name="Furlan L.R."/>
            <person name="Quaggio R.B."/>
            <person name="Monteiro-Vitorello C.B."/>
            <person name="Van Sluys M.A."/>
            <person name="Almeida N.F. Jr."/>
            <person name="Alves L.M.C."/>
            <person name="do Amaral A.M."/>
            <person name="Bertolini M.C."/>
            <person name="Camargo L.E.A."/>
            <person name="Camarotte G."/>
            <person name="Cannavan F."/>
            <person name="Cardozo J."/>
            <person name="Chambergo F."/>
            <person name="Ciapina L.P."/>
            <person name="Cicarelli R.M.B."/>
            <person name="Coutinho L.L."/>
            <person name="Cursino-Santos J.R."/>
            <person name="El-Dorry H."/>
            <person name="Faria J.B."/>
            <person name="Ferreira A.J.S."/>
            <person name="Ferreira R.C.C."/>
            <person name="Ferro M.I.T."/>
            <person name="Formighieri E.F."/>
            <person name="Franco M.C."/>
            <person name="Greggio C.C."/>
            <person name="Gruber A."/>
            <person name="Katsuyama A.M."/>
            <person name="Kishi L.T."/>
            <person name="Leite R.P."/>
            <person name="Lemos E.G.M."/>
            <person name="Lemos M.V.F."/>
            <person name="Locali E.C."/>
            <person name="Machado M.A."/>
            <person name="Madeira A.M.B.N."/>
            <person name="Martinez-Rossi N.M."/>
            <person name="Martins E.C."/>
            <person name="Meidanis J."/>
            <person name="Menck C.F.M."/>
            <person name="Miyaki C.Y."/>
            <person name="Moon D.H."/>
            <person name="Moreira L.M."/>
            <person name="Novo M.T.M."/>
            <person name="Okura V.K."/>
            <person name="Oliveira M.C."/>
            <person name="Oliveira V.R."/>
            <person name="Pereira H.A."/>
            <person name="Rossi A."/>
            <person name="Sena J.A.D."/>
            <person name="Silva C."/>
            <person name="de Souza R.F."/>
            <person name="Spinola L.A.F."/>
            <person name="Takita M.A."/>
            <person name="Tamura R.E."/>
            <person name="Teixeira E.C."/>
            <person name="Tezza R.I.D."/>
            <person name="Trindade dos Santos M."/>
            <person name="Truffi D."/>
            <person name="Tsai S.M."/>
            <person name="White F.F."/>
            <person name="Setubal J.C."/>
            <person name="Kitajima J.P."/>
        </authorList>
    </citation>
    <scope>NUCLEOTIDE SEQUENCE [LARGE SCALE GENOMIC DNA]</scope>
    <source>
        <strain>ATCC 33913 / DSM 3586 / NCPPB 528 / LMG 568 / P 25</strain>
    </source>
</reference>
<feature type="chain" id="PRO_0000154750" description="Large ribosomal subunit protein uL10">
    <location>
        <begin position="1"/>
        <end position="177"/>
    </location>
</feature>
<proteinExistence type="inferred from homology"/>
<evidence type="ECO:0000255" key="1">
    <source>
        <dbReference type="HAMAP-Rule" id="MF_00362"/>
    </source>
</evidence>
<evidence type="ECO:0000305" key="2"/>
<organism>
    <name type="scientific">Xanthomonas campestris pv. campestris (strain ATCC 33913 / DSM 3586 / NCPPB 528 / LMG 568 / P 25)</name>
    <dbReference type="NCBI Taxonomy" id="190485"/>
    <lineage>
        <taxon>Bacteria</taxon>
        <taxon>Pseudomonadati</taxon>
        <taxon>Pseudomonadota</taxon>
        <taxon>Gammaproteobacteria</taxon>
        <taxon>Lysobacterales</taxon>
        <taxon>Lysobacteraceae</taxon>
        <taxon>Xanthomonas</taxon>
    </lineage>
</organism>
<gene>
    <name evidence="1" type="primary">rplJ</name>
    <name type="ordered locus">XCC0886</name>
</gene>
<comment type="function">
    <text evidence="1">Forms part of the ribosomal stalk, playing a central role in the interaction of the ribosome with GTP-bound translation factors.</text>
</comment>
<comment type="subunit">
    <text evidence="1">Part of the ribosomal stalk of the 50S ribosomal subunit. The N-terminus interacts with L11 and the large rRNA to form the base of the stalk. The C-terminus forms an elongated spine to which L12 dimers bind in a sequential fashion forming a multimeric L10(L12)X complex.</text>
</comment>
<comment type="similarity">
    <text evidence="1">Belongs to the universal ribosomal protein uL10 family.</text>
</comment>
<keyword id="KW-1185">Reference proteome</keyword>
<keyword id="KW-0687">Ribonucleoprotein</keyword>
<keyword id="KW-0689">Ribosomal protein</keyword>
<keyword id="KW-0694">RNA-binding</keyword>
<keyword id="KW-0699">rRNA-binding</keyword>
<name>RL10_XANCP</name>
<accession>Q8RTJ3</accession>